<organism>
    <name type="scientific">Lactococcus lactis subsp. lactis (strain IL1403)</name>
    <name type="common">Streptococcus lactis</name>
    <dbReference type="NCBI Taxonomy" id="272623"/>
    <lineage>
        <taxon>Bacteria</taxon>
        <taxon>Bacillati</taxon>
        <taxon>Bacillota</taxon>
        <taxon>Bacilli</taxon>
        <taxon>Lactobacillales</taxon>
        <taxon>Streptococcaceae</taxon>
        <taxon>Lactococcus</taxon>
    </lineage>
</organism>
<proteinExistence type="inferred from homology"/>
<name>FTSH_LACLA</name>
<reference key="1">
    <citation type="journal article" date="1994" name="Microbiology">
        <title>A Lactococcus lactis gene encodes a membrane protein with putative ATPase activity that is homologous to the essential Escherichia coli ftsH gene product.</title>
        <authorList>
            <person name="Nilsson D."/>
            <person name="Lauridsen A.A."/>
            <person name="Tomoyasu T."/>
            <person name="Ogura T."/>
        </authorList>
    </citation>
    <scope>NUCLEOTIDE SEQUENCE [GENOMIC DNA]</scope>
    <source>
        <strain>CHCC285</strain>
    </source>
</reference>
<reference key="2">
    <citation type="journal article" date="2001" name="Genome Res.">
        <title>The complete genome sequence of the lactic acid bacterium Lactococcus lactis ssp. lactis IL1403.</title>
        <authorList>
            <person name="Bolotin A."/>
            <person name="Wincker P."/>
            <person name="Mauger S."/>
            <person name="Jaillon O."/>
            <person name="Malarme K."/>
            <person name="Weissenbach J."/>
            <person name="Ehrlich S.D."/>
            <person name="Sorokin A."/>
        </authorList>
    </citation>
    <scope>NUCLEOTIDE SEQUENCE [LARGE SCALE GENOMIC DNA]</scope>
    <source>
        <strain>IL1403</strain>
    </source>
</reference>
<reference key="3">
    <citation type="journal article" date="1992" name="Mol. Gen. Genet.">
        <title>Isolation of purine auxotrophic mutants of Lactococcus lactis and characterization of the gene hpt encoding hypoxanthine guanine phosphoribosyltransferase.</title>
        <authorList>
            <person name="Nilsson D."/>
            <person name="Lauridsen A.A."/>
        </authorList>
    </citation>
    <scope>NUCLEOTIDE SEQUENCE [GENOMIC DNA] OF 1-103</scope>
</reference>
<protein>
    <recommendedName>
        <fullName evidence="1">ATP-dependent zinc metalloprotease FtsH</fullName>
        <ecNumber evidence="1">3.4.24.-</ecNumber>
    </recommendedName>
</protein>
<sequence>MNNNKQPKQGNFVKNILMWVILAIVVVVGFNFFFSSNQSSVDKISYSQLMTKLDGNKIENVTMQPSDSLITVTGEYKEPVKVKGTNNFPLLGNSSSEVKNFQAYIIPTDSVVKDIQNAAKSNDVKLSVVQASSSGMWVQILSYIIPMLLFVGIFWLMMGGMGARGGGGGGNPMSFGKSRAKQQDGKTSKVRFADVAGSEEEKQELVEVVDFLKNPKKYHDLGARIPAGVLLEGPPGTGKTLLAKAVAGEAGVPFYSISGSDFVEMFVGVGASRVRDLFENAKKTAPSIIFIDEIDAVGRQRGAGLGGGNDEREQTLNQLLVEMDGFQDDGNSVIVIAATNRSDVLDPALLRPGRFDRKVLVGAPDVKGREAVLKVHAKNKPLASDVDLHNVATQTPGYVGADLENVLNEAALVAARQNKKEINAADIDEGMDRAMAGPAKKDRIQSMREREIVAYHEAGHAIVGLVLENGSTVRKVTVVPRGRIGGYMLALPDEEIMQPTNFHLQDQLASLMGGRLGEEIVFGVATPGASNDIEKATHIARSMVTEYGMSKKLGMVSYEGDHQVFIGRDYGQTKTYSEATAVMIDDEVRRILGEAYDRAKEAIETHREQHKAIAEALLKYETLDAKQIMSLFKTGKMPDEAAAAEVPEPKTFEESLKDANANVDDFSNINIYNGDEKTDSKPEENKEKSEDETAE</sequence>
<keyword id="KW-0067">ATP-binding</keyword>
<keyword id="KW-1003">Cell membrane</keyword>
<keyword id="KW-0378">Hydrolase</keyword>
<keyword id="KW-0472">Membrane</keyword>
<keyword id="KW-0479">Metal-binding</keyword>
<keyword id="KW-0482">Metalloprotease</keyword>
<keyword id="KW-0547">Nucleotide-binding</keyword>
<keyword id="KW-0645">Protease</keyword>
<keyword id="KW-1185">Reference proteome</keyword>
<keyword id="KW-0812">Transmembrane</keyword>
<keyword id="KW-1133">Transmembrane helix</keyword>
<keyword id="KW-0862">Zinc</keyword>
<comment type="function">
    <text evidence="1">Acts as a processive, ATP-dependent zinc metallopeptidase for both cytoplasmic and membrane proteins. Plays a role in the quality control of integral membrane proteins.</text>
</comment>
<comment type="cofactor">
    <cofactor evidence="1">
        <name>Zn(2+)</name>
        <dbReference type="ChEBI" id="CHEBI:29105"/>
    </cofactor>
    <text evidence="1">Binds 1 zinc ion per subunit.</text>
</comment>
<comment type="subunit">
    <text evidence="1">Homohexamer.</text>
</comment>
<comment type="subcellular location">
    <subcellularLocation>
        <location evidence="1">Cell membrane</location>
        <topology evidence="1">Multi-pass membrane protein</topology>
        <orientation evidence="1">Cytoplasmic side</orientation>
    </subcellularLocation>
</comment>
<comment type="similarity">
    <text evidence="1">In the central section; belongs to the AAA ATPase family.</text>
</comment>
<comment type="similarity">
    <text evidence="1">In the C-terminal section; belongs to the peptidase M41 family.</text>
</comment>
<gene>
    <name evidence="1" type="primary">ftsH</name>
    <name type="synonym">tma</name>
    <name type="ordered locus">LL0021</name>
    <name type="ORF">L0204</name>
</gene>
<feature type="chain" id="PRO_0000084638" description="ATP-dependent zinc metalloprotease FtsH">
    <location>
        <begin position="1"/>
        <end position="695"/>
    </location>
</feature>
<feature type="topological domain" description="Cytoplasmic" evidence="1">
    <location>
        <begin position="1"/>
        <end position="15"/>
    </location>
</feature>
<feature type="transmembrane region" description="Helical" evidence="1">
    <location>
        <begin position="16"/>
        <end position="36"/>
    </location>
</feature>
<feature type="topological domain" description="Extracellular" evidence="1">
    <location>
        <begin position="37"/>
        <end position="139"/>
    </location>
</feature>
<feature type="transmembrane region" description="Helical" evidence="1">
    <location>
        <begin position="140"/>
        <end position="160"/>
    </location>
</feature>
<feature type="topological domain" description="Cytoplasmic" evidence="1">
    <location>
        <begin position="161"/>
        <end position="695"/>
    </location>
</feature>
<feature type="region of interest" description="Disordered" evidence="2">
    <location>
        <begin position="657"/>
        <end position="695"/>
    </location>
</feature>
<feature type="compositionally biased region" description="Basic and acidic residues" evidence="2">
    <location>
        <begin position="674"/>
        <end position="695"/>
    </location>
</feature>
<feature type="active site" evidence="1">
    <location>
        <position position="457"/>
    </location>
</feature>
<feature type="binding site" evidence="1">
    <location>
        <begin position="233"/>
        <end position="240"/>
    </location>
    <ligand>
        <name>ATP</name>
        <dbReference type="ChEBI" id="CHEBI:30616"/>
    </ligand>
</feature>
<feature type="binding site" evidence="1">
    <location>
        <position position="456"/>
    </location>
    <ligand>
        <name>Zn(2+)</name>
        <dbReference type="ChEBI" id="CHEBI:29105"/>
        <note>catalytic</note>
    </ligand>
</feature>
<feature type="binding site" evidence="1">
    <location>
        <position position="460"/>
    </location>
    <ligand>
        <name>Zn(2+)</name>
        <dbReference type="ChEBI" id="CHEBI:29105"/>
        <note>catalytic</note>
    </ligand>
</feature>
<feature type="binding site" evidence="1">
    <location>
        <position position="532"/>
    </location>
    <ligand>
        <name>Zn(2+)</name>
        <dbReference type="ChEBI" id="CHEBI:29105"/>
        <note>catalytic</note>
    </ligand>
</feature>
<accession>P46469</accession>
<dbReference type="EC" id="3.4.24.-" evidence="1"/>
<dbReference type="EMBL" id="X69123">
    <property type="protein sequence ID" value="CAA48877.1"/>
    <property type="molecule type" value="Genomic_DNA"/>
</dbReference>
<dbReference type="EMBL" id="AE005176">
    <property type="protein sequence ID" value="AAK04119.1"/>
    <property type="molecule type" value="Genomic_DNA"/>
</dbReference>
<dbReference type="EMBL" id="X67015">
    <property type="protein sequence ID" value="CAA47405.1"/>
    <property type="molecule type" value="Genomic_DNA"/>
</dbReference>
<dbReference type="PIR" id="E86627">
    <property type="entry name" value="E86627"/>
</dbReference>
<dbReference type="PIR" id="S28533">
    <property type="entry name" value="S28533"/>
</dbReference>
<dbReference type="RefSeq" id="NP_266177.1">
    <property type="nucleotide sequence ID" value="NC_002662.1"/>
</dbReference>
<dbReference type="RefSeq" id="WP_003132177.1">
    <property type="nucleotide sequence ID" value="NC_002662.1"/>
</dbReference>
<dbReference type="SMR" id="P46469"/>
<dbReference type="MEROPS" id="M41.009"/>
<dbReference type="PaxDb" id="272623-L0204"/>
<dbReference type="EnsemblBacteria" id="AAK04119">
    <property type="protein sequence ID" value="AAK04119"/>
    <property type="gene ID" value="L0204"/>
</dbReference>
<dbReference type="GeneID" id="89632190"/>
<dbReference type="KEGG" id="lla:L0204"/>
<dbReference type="PATRIC" id="fig|272623.7.peg.23"/>
<dbReference type="eggNOG" id="COG0465">
    <property type="taxonomic scope" value="Bacteria"/>
</dbReference>
<dbReference type="HOGENOM" id="CLU_000688_16_2_9"/>
<dbReference type="OrthoDB" id="9809379at2"/>
<dbReference type="Proteomes" id="UP000002196">
    <property type="component" value="Chromosome"/>
</dbReference>
<dbReference type="GO" id="GO:0005886">
    <property type="term" value="C:plasma membrane"/>
    <property type="evidence" value="ECO:0007669"/>
    <property type="project" value="UniProtKB-SubCell"/>
</dbReference>
<dbReference type="GO" id="GO:0005524">
    <property type="term" value="F:ATP binding"/>
    <property type="evidence" value="ECO:0007669"/>
    <property type="project" value="UniProtKB-UniRule"/>
</dbReference>
<dbReference type="GO" id="GO:0016887">
    <property type="term" value="F:ATP hydrolysis activity"/>
    <property type="evidence" value="ECO:0007669"/>
    <property type="project" value="UniProtKB-UniRule"/>
</dbReference>
<dbReference type="GO" id="GO:0004176">
    <property type="term" value="F:ATP-dependent peptidase activity"/>
    <property type="evidence" value="ECO:0007669"/>
    <property type="project" value="InterPro"/>
</dbReference>
<dbReference type="GO" id="GO:0004222">
    <property type="term" value="F:metalloendopeptidase activity"/>
    <property type="evidence" value="ECO:0007669"/>
    <property type="project" value="InterPro"/>
</dbReference>
<dbReference type="GO" id="GO:0008270">
    <property type="term" value="F:zinc ion binding"/>
    <property type="evidence" value="ECO:0007669"/>
    <property type="project" value="UniProtKB-UniRule"/>
</dbReference>
<dbReference type="GO" id="GO:0030163">
    <property type="term" value="P:protein catabolic process"/>
    <property type="evidence" value="ECO:0007669"/>
    <property type="project" value="UniProtKB-UniRule"/>
</dbReference>
<dbReference type="GO" id="GO:0006508">
    <property type="term" value="P:proteolysis"/>
    <property type="evidence" value="ECO:0007669"/>
    <property type="project" value="UniProtKB-KW"/>
</dbReference>
<dbReference type="CDD" id="cd19501">
    <property type="entry name" value="RecA-like_FtsH"/>
    <property type="match status" value="1"/>
</dbReference>
<dbReference type="FunFam" id="1.10.8.60:FF:000001">
    <property type="entry name" value="ATP-dependent zinc metalloprotease FtsH"/>
    <property type="match status" value="1"/>
</dbReference>
<dbReference type="FunFam" id="1.20.58.760:FF:000001">
    <property type="entry name" value="ATP-dependent zinc metalloprotease FtsH"/>
    <property type="match status" value="1"/>
</dbReference>
<dbReference type="FunFam" id="3.40.50.300:FF:000001">
    <property type="entry name" value="ATP-dependent zinc metalloprotease FtsH"/>
    <property type="match status" value="1"/>
</dbReference>
<dbReference type="Gene3D" id="1.10.8.60">
    <property type="match status" value="1"/>
</dbReference>
<dbReference type="Gene3D" id="3.40.50.300">
    <property type="entry name" value="P-loop containing nucleotide triphosphate hydrolases"/>
    <property type="match status" value="1"/>
</dbReference>
<dbReference type="Gene3D" id="1.20.58.760">
    <property type="entry name" value="Peptidase M41"/>
    <property type="match status" value="1"/>
</dbReference>
<dbReference type="HAMAP" id="MF_01458">
    <property type="entry name" value="FtsH"/>
    <property type="match status" value="1"/>
</dbReference>
<dbReference type="InterPro" id="IPR003593">
    <property type="entry name" value="AAA+_ATPase"/>
</dbReference>
<dbReference type="InterPro" id="IPR041569">
    <property type="entry name" value="AAA_lid_3"/>
</dbReference>
<dbReference type="InterPro" id="IPR050928">
    <property type="entry name" value="ATP-dep_Zn_Metalloprotease"/>
</dbReference>
<dbReference type="InterPro" id="IPR003959">
    <property type="entry name" value="ATPase_AAA_core"/>
</dbReference>
<dbReference type="InterPro" id="IPR003960">
    <property type="entry name" value="ATPase_AAA_CS"/>
</dbReference>
<dbReference type="InterPro" id="IPR005936">
    <property type="entry name" value="FtsH"/>
</dbReference>
<dbReference type="InterPro" id="IPR027417">
    <property type="entry name" value="P-loop_NTPase"/>
</dbReference>
<dbReference type="InterPro" id="IPR011546">
    <property type="entry name" value="Pept_M41_FtsH_extracell"/>
</dbReference>
<dbReference type="InterPro" id="IPR000642">
    <property type="entry name" value="Peptidase_M41"/>
</dbReference>
<dbReference type="InterPro" id="IPR037219">
    <property type="entry name" value="Peptidase_M41-like"/>
</dbReference>
<dbReference type="NCBIfam" id="TIGR01241">
    <property type="entry name" value="FtsH_fam"/>
    <property type="match status" value="1"/>
</dbReference>
<dbReference type="PANTHER" id="PTHR43655:SF2">
    <property type="entry name" value="AFG3 LIKE MATRIX AAA PEPTIDASE SUBUNIT 2, ISOFORM A"/>
    <property type="match status" value="1"/>
</dbReference>
<dbReference type="PANTHER" id="PTHR43655">
    <property type="entry name" value="ATP-DEPENDENT PROTEASE"/>
    <property type="match status" value="1"/>
</dbReference>
<dbReference type="Pfam" id="PF00004">
    <property type="entry name" value="AAA"/>
    <property type="match status" value="1"/>
</dbReference>
<dbReference type="Pfam" id="PF17862">
    <property type="entry name" value="AAA_lid_3"/>
    <property type="match status" value="1"/>
</dbReference>
<dbReference type="Pfam" id="PF06480">
    <property type="entry name" value="FtsH_ext"/>
    <property type="match status" value="1"/>
</dbReference>
<dbReference type="Pfam" id="PF01434">
    <property type="entry name" value="Peptidase_M41"/>
    <property type="match status" value="1"/>
</dbReference>
<dbReference type="SMART" id="SM00382">
    <property type="entry name" value="AAA"/>
    <property type="match status" value="1"/>
</dbReference>
<dbReference type="SUPFAM" id="SSF140990">
    <property type="entry name" value="FtsH protease domain-like"/>
    <property type="match status" value="1"/>
</dbReference>
<dbReference type="SUPFAM" id="SSF52540">
    <property type="entry name" value="P-loop containing nucleoside triphosphate hydrolases"/>
    <property type="match status" value="1"/>
</dbReference>
<dbReference type="PROSITE" id="PS00674">
    <property type="entry name" value="AAA"/>
    <property type="match status" value="1"/>
</dbReference>
<evidence type="ECO:0000255" key="1">
    <source>
        <dbReference type="HAMAP-Rule" id="MF_01458"/>
    </source>
</evidence>
<evidence type="ECO:0000256" key="2">
    <source>
        <dbReference type="SAM" id="MobiDB-lite"/>
    </source>
</evidence>